<keyword id="KW-0963">Cytoplasm</keyword>
<keyword id="KW-0690">Ribosome biogenesis</keyword>
<comment type="function">
    <text evidence="1">Required for maturation of 30S ribosomal subunits.</text>
</comment>
<comment type="subcellular location">
    <subcellularLocation>
        <location evidence="1">Cytoplasm</location>
    </subcellularLocation>
</comment>
<comment type="similarity">
    <text evidence="1">Belongs to the RimP family.</text>
</comment>
<protein>
    <recommendedName>
        <fullName evidence="1">Ribosome maturation factor RimP</fullName>
    </recommendedName>
</protein>
<organism>
    <name type="scientific">Burkholderia ambifaria (strain ATCC BAA-244 / DSM 16087 / CCUG 44356 / LMG 19182 / AMMD)</name>
    <name type="common">Burkholderia cepacia (strain AMMD)</name>
    <dbReference type="NCBI Taxonomy" id="339670"/>
    <lineage>
        <taxon>Bacteria</taxon>
        <taxon>Pseudomonadati</taxon>
        <taxon>Pseudomonadota</taxon>
        <taxon>Betaproteobacteria</taxon>
        <taxon>Burkholderiales</taxon>
        <taxon>Burkholderiaceae</taxon>
        <taxon>Burkholderia</taxon>
        <taxon>Burkholderia cepacia complex</taxon>
    </lineage>
</organism>
<gene>
    <name evidence="1" type="primary">rimP</name>
    <name type="ordered locus">Bamb_1380</name>
</gene>
<dbReference type="EMBL" id="CP000440">
    <property type="protein sequence ID" value="ABI86938.1"/>
    <property type="molecule type" value="Genomic_DNA"/>
</dbReference>
<dbReference type="RefSeq" id="WP_006752291.1">
    <property type="nucleotide sequence ID" value="NZ_CP009798.1"/>
</dbReference>
<dbReference type="SMR" id="Q0BFY5"/>
<dbReference type="GeneID" id="93083219"/>
<dbReference type="KEGG" id="bam:Bamb_1380"/>
<dbReference type="PATRIC" id="fig|339670.21.peg.162"/>
<dbReference type="eggNOG" id="COG0779">
    <property type="taxonomic scope" value="Bacteria"/>
</dbReference>
<dbReference type="Proteomes" id="UP000000662">
    <property type="component" value="Chromosome 1"/>
</dbReference>
<dbReference type="GO" id="GO:0005829">
    <property type="term" value="C:cytosol"/>
    <property type="evidence" value="ECO:0007669"/>
    <property type="project" value="TreeGrafter"/>
</dbReference>
<dbReference type="GO" id="GO:0000028">
    <property type="term" value="P:ribosomal small subunit assembly"/>
    <property type="evidence" value="ECO:0007669"/>
    <property type="project" value="TreeGrafter"/>
</dbReference>
<dbReference type="GO" id="GO:0006412">
    <property type="term" value="P:translation"/>
    <property type="evidence" value="ECO:0007669"/>
    <property type="project" value="TreeGrafter"/>
</dbReference>
<dbReference type="CDD" id="cd01734">
    <property type="entry name" value="YlxS_C"/>
    <property type="match status" value="1"/>
</dbReference>
<dbReference type="Gene3D" id="2.30.30.180">
    <property type="entry name" value="Ribosome maturation factor RimP, C-terminal domain"/>
    <property type="match status" value="1"/>
</dbReference>
<dbReference type="Gene3D" id="3.30.300.70">
    <property type="entry name" value="RimP-like superfamily, N-terminal"/>
    <property type="match status" value="1"/>
</dbReference>
<dbReference type="HAMAP" id="MF_01077">
    <property type="entry name" value="RimP"/>
    <property type="match status" value="1"/>
</dbReference>
<dbReference type="InterPro" id="IPR003728">
    <property type="entry name" value="Ribosome_maturation_RimP"/>
</dbReference>
<dbReference type="InterPro" id="IPR028998">
    <property type="entry name" value="RimP_C"/>
</dbReference>
<dbReference type="InterPro" id="IPR036847">
    <property type="entry name" value="RimP_C_sf"/>
</dbReference>
<dbReference type="InterPro" id="IPR028989">
    <property type="entry name" value="RimP_N"/>
</dbReference>
<dbReference type="InterPro" id="IPR035956">
    <property type="entry name" value="RimP_N_sf"/>
</dbReference>
<dbReference type="NCBIfam" id="NF000929">
    <property type="entry name" value="PRK00092.2-1"/>
    <property type="match status" value="1"/>
</dbReference>
<dbReference type="PANTHER" id="PTHR33867">
    <property type="entry name" value="RIBOSOME MATURATION FACTOR RIMP"/>
    <property type="match status" value="1"/>
</dbReference>
<dbReference type="PANTHER" id="PTHR33867:SF1">
    <property type="entry name" value="RIBOSOME MATURATION FACTOR RIMP"/>
    <property type="match status" value="1"/>
</dbReference>
<dbReference type="Pfam" id="PF17384">
    <property type="entry name" value="DUF150_C"/>
    <property type="match status" value="1"/>
</dbReference>
<dbReference type="Pfam" id="PF02576">
    <property type="entry name" value="RimP_N"/>
    <property type="match status" value="1"/>
</dbReference>
<dbReference type="SUPFAM" id="SSF74942">
    <property type="entry name" value="YhbC-like, C-terminal domain"/>
    <property type="match status" value="1"/>
</dbReference>
<dbReference type="SUPFAM" id="SSF75420">
    <property type="entry name" value="YhbC-like, N-terminal domain"/>
    <property type="match status" value="1"/>
</dbReference>
<accession>Q0BFY5</accession>
<evidence type="ECO:0000255" key="1">
    <source>
        <dbReference type="HAMAP-Rule" id="MF_01077"/>
    </source>
</evidence>
<proteinExistence type="inferred from homology"/>
<name>RIMP_BURCM</name>
<feature type="chain" id="PRO_1000064690" description="Ribosome maturation factor RimP">
    <location>
        <begin position="1"/>
        <end position="152"/>
    </location>
</feature>
<sequence length="152" mass="17070">MQLTELIETTVTGLGYELVDLERTGRGMLCIYIDQLAGISLEDCEKVTRQLQHVLTVENIDYERLEVSSPGLDRPLKKLADFERFAGSEVSVTLKKPLDGRKTYRGILHAPNGETIGLEFEGKKGEAAMLDFTLADIDKARLIPQVDFRSRK</sequence>
<reference key="1">
    <citation type="submission" date="2006-08" db="EMBL/GenBank/DDBJ databases">
        <title>Complete sequence of chromosome 1 of Burkholderia cepacia AMMD.</title>
        <authorList>
            <person name="Copeland A."/>
            <person name="Lucas S."/>
            <person name="Lapidus A."/>
            <person name="Barry K."/>
            <person name="Detter J.C."/>
            <person name="Glavina del Rio T."/>
            <person name="Hammon N."/>
            <person name="Israni S."/>
            <person name="Pitluck S."/>
            <person name="Bruce D."/>
            <person name="Chain P."/>
            <person name="Malfatti S."/>
            <person name="Shin M."/>
            <person name="Vergez L."/>
            <person name="Schmutz J."/>
            <person name="Larimer F."/>
            <person name="Land M."/>
            <person name="Hauser L."/>
            <person name="Kyrpides N."/>
            <person name="Kim E."/>
            <person name="Parke J."/>
            <person name="Coenye T."/>
            <person name="Konstantinidis K."/>
            <person name="Ramette A."/>
            <person name="Tiedje J."/>
            <person name="Richardson P."/>
        </authorList>
    </citation>
    <scope>NUCLEOTIDE SEQUENCE [LARGE SCALE GENOMIC DNA]</scope>
    <source>
        <strain>ATCC BAA-244 / DSM 16087 / CCUG 44356 / LMG 19182 / AMMD</strain>
    </source>
</reference>